<gene>
    <name evidence="1" type="primary">ybeY</name>
    <name type="ordered locus">Spea_3139</name>
</gene>
<proteinExistence type="inferred from homology"/>
<protein>
    <recommendedName>
        <fullName evidence="1">Endoribonuclease YbeY</fullName>
        <ecNumber evidence="1">3.1.-.-</ecNumber>
    </recommendedName>
</protein>
<sequence>MSDSQMVIDLDVQVAVEGFELPSQAELELWVKTALRDTMSEAELTIRIVDVEESQELNMTYRGKDKPTNVLSFPFEAPPGIELPLLGDLVICAAVVEQEAIDQNKPLLAHWAHMVVHGCLHLLGYDHIEDVEAEEMESLETQLIESLGYINPYKEQ</sequence>
<comment type="function">
    <text evidence="1">Single strand-specific metallo-endoribonuclease involved in late-stage 70S ribosome quality control and in maturation of the 3' terminus of the 16S rRNA.</text>
</comment>
<comment type="cofactor">
    <cofactor evidence="1">
        <name>Zn(2+)</name>
        <dbReference type="ChEBI" id="CHEBI:29105"/>
    </cofactor>
    <text evidence="1">Binds 1 zinc ion.</text>
</comment>
<comment type="subcellular location">
    <subcellularLocation>
        <location evidence="1">Cytoplasm</location>
    </subcellularLocation>
</comment>
<comment type="similarity">
    <text evidence="1">Belongs to the endoribonuclease YbeY family.</text>
</comment>
<accession>A8H7B8</accession>
<organism>
    <name type="scientific">Shewanella pealeana (strain ATCC 700345 / ANG-SQ1)</name>
    <dbReference type="NCBI Taxonomy" id="398579"/>
    <lineage>
        <taxon>Bacteria</taxon>
        <taxon>Pseudomonadati</taxon>
        <taxon>Pseudomonadota</taxon>
        <taxon>Gammaproteobacteria</taxon>
        <taxon>Alteromonadales</taxon>
        <taxon>Shewanellaceae</taxon>
        <taxon>Shewanella</taxon>
    </lineage>
</organism>
<reference key="1">
    <citation type="submission" date="2007-10" db="EMBL/GenBank/DDBJ databases">
        <title>Complete sequence of Shewanella pealeana ATCC 700345.</title>
        <authorList>
            <consortium name="US DOE Joint Genome Institute"/>
            <person name="Copeland A."/>
            <person name="Lucas S."/>
            <person name="Lapidus A."/>
            <person name="Barry K."/>
            <person name="Glavina del Rio T."/>
            <person name="Dalin E."/>
            <person name="Tice H."/>
            <person name="Pitluck S."/>
            <person name="Chertkov O."/>
            <person name="Brettin T."/>
            <person name="Bruce D."/>
            <person name="Detter J.C."/>
            <person name="Han C."/>
            <person name="Schmutz J."/>
            <person name="Larimer F."/>
            <person name="Land M."/>
            <person name="Hauser L."/>
            <person name="Kyrpides N."/>
            <person name="Kim E."/>
            <person name="Zhao J.-S.Z."/>
            <person name="Manno D."/>
            <person name="Hawari J."/>
            <person name="Richardson P."/>
        </authorList>
    </citation>
    <scope>NUCLEOTIDE SEQUENCE [LARGE SCALE GENOMIC DNA]</scope>
    <source>
        <strain>ATCC 700345 / ANG-SQ1</strain>
    </source>
</reference>
<dbReference type="EC" id="3.1.-.-" evidence="1"/>
<dbReference type="EMBL" id="CP000851">
    <property type="protein sequence ID" value="ABV88455.1"/>
    <property type="molecule type" value="Genomic_DNA"/>
</dbReference>
<dbReference type="RefSeq" id="WP_012156357.1">
    <property type="nucleotide sequence ID" value="NC_009901.1"/>
</dbReference>
<dbReference type="SMR" id="A8H7B8"/>
<dbReference type="STRING" id="398579.Spea_3139"/>
<dbReference type="KEGG" id="spl:Spea_3139"/>
<dbReference type="eggNOG" id="COG0319">
    <property type="taxonomic scope" value="Bacteria"/>
</dbReference>
<dbReference type="HOGENOM" id="CLU_106710_0_1_6"/>
<dbReference type="Proteomes" id="UP000002608">
    <property type="component" value="Chromosome"/>
</dbReference>
<dbReference type="GO" id="GO:0005737">
    <property type="term" value="C:cytoplasm"/>
    <property type="evidence" value="ECO:0007669"/>
    <property type="project" value="UniProtKB-SubCell"/>
</dbReference>
<dbReference type="GO" id="GO:0004222">
    <property type="term" value="F:metalloendopeptidase activity"/>
    <property type="evidence" value="ECO:0007669"/>
    <property type="project" value="InterPro"/>
</dbReference>
<dbReference type="GO" id="GO:0004521">
    <property type="term" value="F:RNA endonuclease activity"/>
    <property type="evidence" value="ECO:0007669"/>
    <property type="project" value="UniProtKB-UniRule"/>
</dbReference>
<dbReference type="GO" id="GO:0008270">
    <property type="term" value="F:zinc ion binding"/>
    <property type="evidence" value="ECO:0007669"/>
    <property type="project" value="UniProtKB-UniRule"/>
</dbReference>
<dbReference type="GO" id="GO:0006364">
    <property type="term" value="P:rRNA processing"/>
    <property type="evidence" value="ECO:0007669"/>
    <property type="project" value="UniProtKB-UniRule"/>
</dbReference>
<dbReference type="Gene3D" id="3.40.390.30">
    <property type="entry name" value="Metalloproteases ('zincins'), catalytic domain"/>
    <property type="match status" value="1"/>
</dbReference>
<dbReference type="HAMAP" id="MF_00009">
    <property type="entry name" value="Endoribonucl_YbeY"/>
    <property type="match status" value="1"/>
</dbReference>
<dbReference type="InterPro" id="IPR023091">
    <property type="entry name" value="MetalPrtase_cat_dom_sf_prd"/>
</dbReference>
<dbReference type="InterPro" id="IPR002036">
    <property type="entry name" value="YbeY"/>
</dbReference>
<dbReference type="InterPro" id="IPR020549">
    <property type="entry name" value="YbeY_CS"/>
</dbReference>
<dbReference type="NCBIfam" id="TIGR00043">
    <property type="entry name" value="rRNA maturation RNase YbeY"/>
    <property type="match status" value="1"/>
</dbReference>
<dbReference type="PANTHER" id="PTHR46986">
    <property type="entry name" value="ENDORIBONUCLEASE YBEY, CHLOROPLASTIC"/>
    <property type="match status" value="1"/>
</dbReference>
<dbReference type="PANTHER" id="PTHR46986:SF1">
    <property type="entry name" value="ENDORIBONUCLEASE YBEY, CHLOROPLASTIC"/>
    <property type="match status" value="1"/>
</dbReference>
<dbReference type="Pfam" id="PF02130">
    <property type="entry name" value="YbeY"/>
    <property type="match status" value="1"/>
</dbReference>
<dbReference type="SUPFAM" id="SSF55486">
    <property type="entry name" value="Metalloproteases ('zincins'), catalytic domain"/>
    <property type="match status" value="1"/>
</dbReference>
<dbReference type="PROSITE" id="PS01306">
    <property type="entry name" value="UPF0054"/>
    <property type="match status" value="1"/>
</dbReference>
<keyword id="KW-0963">Cytoplasm</keyword>
<keyword id="KW-0255">Endonuclease</keyword>
<keyword id="KW-0378">Hydrolase</keyword>
<keyword id="KW-0479">Metal-binding</keyword>
<keyword id="KW-0540">Nuclease</keyword>
<keyword id="KW-1185">Reference proteome</keyword>
<keyword id="KW-0690">Ribosome biogenesis</keyword>
<keyword id="KW-0698">rRNA processing</keyword>
<keyword id="KW-0862">Zinc</keyword>
<name>YBEY_SHEPA</name>
<evidence type="ECO:0000255" key="1">
    <source>
        <dbReference type="HAMAP-Rule" id="MF_00009"/>
    </source>
</evidence>
<feature type="chain" id="PRO_0000336017" description="Endoribonuclease YbeY">
    <location>
        <begin position="1"/>
        <end position="156"/>
    </location>
</feature>
<feature type="binding site" evidence="1">
    <location>
        <position position="117"/>
    </location>
    <ligand>
        <name>Zn(2+)</name>
        <dbReference type="ChEBI" id="CHEBI:29105"/>
        <note>catalytic</note>
    </ligand>
</feature>
<feature type="binding site" evidence="1">
    <location>
        <position position="121"/>
    </location>
    <ligand>
        <name>Zn(2+)</name>
        <dbReference type="ChEBI" id="CHEBI:29105"/>
        <note>catalytic</note>
    </ligand>
</feature>
<feature type="binding site" evidence="1">
    <location>
        <position position="127"/>
    </location>
    <ligand>
        <name>Zn(2+)</name>
        <dbReference type="ChEBI" id="CHEBI:29105"/>
        <note>catalytic</note>
    </ligand>
</feature>